<protein>
    <recommendedName>
        <fullName evidence="1">tRNA N6-adenosine threonylcarbamoyltransferase</fullName>
        <ecNumber evidence="1">2.3.1.234</ecNumber>
    </recommendedName>
    <alternativeName>
        <fullName evidence="1">N6-L-threonylcarbamoyladenine synthase</fullName>
        <shortName evidence="1">t(6)A synthase</shortName>
    </alternativeName>
    <alternativeName>
        <fullName evidence="1">t(6)A37 threonylcarbamoyladenosine biosynthesis protein TsaD</fullName>
    </alternativeName>
    <alternativeName>
        <fullName evidence="1">tRNA threonylcarbamoyladenosine biosynthesis protein TsaD</fullName>
    </alternativeName>
</protein>
<dbReference type="EC" id="2.3.1.234" evidence="1"/>
<dbReference type="EMBL" id="AP008981">
    <property type="protein sequence ID" value="BAG40202.1"/>
    <property type="molecule type" value="Genomic_DNA"/>
</dbReference>
<dbReference type="SMR" id="B3CRT6"/>
<dbReference type="KEGG" id="ott:OTT_0744"/>
<dbReference type="HOGENOM" id="CLU_023208_0_2_5"/>
<dbReference type="OrthoDB" id="9806197at2"/>
<dbReference type="Proteomes" id="UP000001033">
    <property type="component" value="Chromosome"/>
</dbReference>
<dbReference type="GO" id="GO:0005737">
    <property type="term" value="C:cytoplasm"/>
    <property type="evidence" value="ECO:0007669"/>
    <property type="project" value="UniProtKB-SubCell"/>
</dbReference>
<dbReference type="GO" id="GO:0005506">
    <property type="term" value="F:iron ion binding"/>
    <property type="evidence" value="ECO:0007669"/>
    <property type="project" value="UniProtKB-UniRule"/>
</dbReference>
<dbReference type="GO" id="GO:0061711">
    <property type="term" value="F:N(6)-L-threonylcarbamoyladenine synthase activity"/>
    <property type="evidence" value="ECO:0007669"/>
    <property type="project" value="UniProtKB-EC"/>
</dbReference>
<dbReference type="GO" id="GO:0002949">
    <property type="term" value="P:tRNA threonylcarbamoyladenosine modification"/>
    <property type="evidence" value="ECO:0007669"/>
    <property type="project" value="UniProtKB-UniRule"/>
</dbReference>
<dbReference type="CDD" id="cd24133">
    <property type="entry name" value="ASKHA_NBD_TsaD_bac"/>
    <property type="match status" value="1"/>
</dbReference>
<dbReference type="FunFam" id="3.30.420.40:FF:000012">
    <property type="entry name" value="tRNA N6-adenosine threonylcarbamoyltransferase"/>
    <property type="match status" value="1"/>
</dbReference>
<dbReference type="Gene3D" id="3.30.420.40">
    <property type="match status" value="2"/>
</dbReference>
<dbReference type="HAMAP" id="MF_01445">
    <property type="entry name" value="TsaD"/>
    <property type="match status" value="1"/>
</dbReference>
<dbReference type="InterPro" id="IPR043129">
    <property type="entry name" value="ATPase_NBD"/>
</dbReference>
<dbReference type="InterPro" id="IPR000905">
    <property type="entry name" value="Gcp-like_dom"/>
</dbReference>
<dbReference type="InterPro" id="IPR017861">
    <property type="entry name" value="KAE1/TsaD"/>
</dbReference>
<dbReference type="InterPro" id="IPR022450">
    <property type="entry name" value="TsaD"/>
</dbReference>
<dbReference type="NCBIfam" id="TIGR00329">
    <property type="entry name" value="gcp_kae1"/>
    <property type="match status" value="1"/>
</dbReference>
<dbReference type="NCBIfam" id="TIGR03723">
    <property type="entry name" value="T6A_TsaD_YgjD"/>
    <property type="match status" value="1"/>
</dbReference>
<dbReference type="PANTHER" id="PTHR11735">
    <property type="entry name" value="TRNA N6-ADENOSINE THREONYLCARBAMOYLTRANSFERASE"/>
    <property type="match status" value="1"/>
</dbReference>
<dbReference type="PANTHER" id="PTHR11735:SF6">
    <property type="entry name" value="TRNA N6-ADENOSINE THREONYLCARBAMOYLTRANSFERASE, MITOCHONDRIAL"/>
    <property type="match status" value="1"/>
</dbReference>
<dbReference type="Pfam" id="PF00814">
    <property type="entry name" value="TsaD"/>
    <property type="match status" value="1"/>
</dbReference>
<dbReference type="PRINTS" id="PR00789">
    <property type="entry name" value="OSIALOPTASE"/>
</dbReference>
<dbReference type="SUPFAM" id="SSF53067">
    <property type="entry name" value="Actin-like ATPase domain"/>
    <property type="match status" value="2"/>
</dbReference>
<keyword id="KW-0012">Acyltransferase</keyword>
<keyword id="KW-0963">Cytoplasm</keyword>
<keyword id="KW-0408">Iron</keyword>
<keyword id="KW-0479">Metal-binding</keyword>
<keyword id="KW-0808">Transferase</keyword>
<keyword id="KW-0819">tRNA processing</keyword>
<sequence length="344" mass="37199">MNVIGIESSCDDTAIAIVNSNREIIANVVISQYTEHLPYSGVVPEIAARAHLKNLQYAMKETLNQAKINFTDIDVIAATSGPGLIGGVIVGSVFGQAIACALGKDFIAVNHLEGHILAVRLNENISFPYLVLLVSGGHCQFIAVLGVGKYKILGQTIDDAVGEAFDKTARLLKLGYPGGPIIEKLASKGDPHKYSLPLSMTKKSGCDLSFSGLKTAVKQLIFSIESLSEKVICDICASFQYTVVQILLCRSINAIKLFESYCSNNFKINRKNYFVISGGVAANQYLRQEIFNLASTYGYCGVAPPSNLCTDNAAMIAWAGIERLNANLFSSNFVPRAKWSVEEL</sequence>
<gene>
    <name evidence="1" type="primary">tsaD</name>
    <name type="synonym">gcp</name>
    <name type="ordered locus">OTT_0744</name>
</gene>
<evidence type="ECO:0000255" key="1">
    <source>
        <dbReference type="HAMAP-Rule" id="MF_01445"/>
    </source>
</evidence>
<proteinExistence type="inferred from homology"/>
<organism>
    <name type="scientific">Orientia tsutsugamushi (strain Ikeda)</name>
    <name type="common">Rickettsia tsutsugamushi</name>
    <dbReference type="NCBI Taxonomy" id="334380"/>
    <lineage>
        <taxon>Bacteria</taxon>
        <taxon>Pseudomonadati</taxon>
        <taxon>Pseudomonadota</taxon>
        <taxon>Alphaproteobacteria</taxon>
        <taxon>Rickettsiales</taxon>
        <taxon>Rickettsiaceae</taxon>
        <taxon>Rickettsieae</taxon>
        <taxon>Orientia</taxon>
    </lineage>
</organism>
<accession>B3CRT6</accession>
<comment type="function">
    <text evidence="1">Required for the formation of a threonylcarbamoyl group on adenosine at position 37 (t(6)A37) in tRNAs that read codons beginning with adenine. Is involved in the transfer of the threonylcarbamoyl moiety of threonylcarbamoyl-AMP (TC-AMP) to the N6 group of A37, together with TsaE and TsaB. TsaD likely plays a direct catalytic role in this reaction.</text>
</comment>
<comment type="catalytic activity">
    <reaction evidence="1">
        <text>L-threonylcarbamoyladenylate + adenosine(37) in tRNA = N(6)-L-threonylcarbamoyladenosine(37) in tRNA + AMP + H(+)</text>
        <dbReference type="Rhea" id="RHEA:37059"/>
        <dbReference type="Rhea" id="RHEA-COMP:10162"/>
        <dbReference type="Rhea" id="RHEA-COMP:10163"/>
        <dbReference type="ChEBI" id="CHEBI:15378"/>
        <dbReference type="ChEBI" id="CHEBI:73682"/>
        <dbReference type="ChEBI" id="CHEBI:74411"/>
        <dbReference type="ChEBI" id="CHEBI:74418"/>
        <dbReference type="ChEBI" id="CHEBI:456215"/>
        <dbReference type="EC" id="2.3.1.234"/>
    </reaction>
</comment>
<comment type="cofactor">
    <cofactor evidence="1">
        <name>Fe(2+)</name>
        <dbReference type="ChEBI" id="CHEBI:29033"/>
    </cofactor>
    <text evidence="1">Binds 1 Fe(2+) ion per subunit.</text>
</comment>
<comment type="subcellular location">
    <subcellularLocation>
        <location evidence="1">Cytoplasm</location>
    </subcellularLocation>
</comment>
<comment type="similarity">
    <text evidence="1">Belongs to the KAE1 / TsaD family.</text>
</comment>
<reference key="1">
    <citation type="journal article" date="2008" name="DNA Res.">
        <title>The whole-genome sequencing of the obligate intracellular bacterium Orientia tsutsugamushi revealed massive gene amplification during reductive genome evolution.</title>
        <authorList>
            <person name="Nakayama K."/>
            <person name="Yamashita A."/>
            <person name="Kurokawa K."/>
            <person name="Morimoto T."/>
            <person name="Ogawa M."/>
            <person name="Fukuhara M."/>
            <person name="Urakami H."/>
            <person name="Ohnishi M."/>
            <person name="Uchiyama I."/>
            <person name="Ogura Y."/>
            <person name="Ooka T."/>
            <person name="Oshima K."/>
            <person name="Tamura A."/>
            <person name="Hattori M."/>
            <person name="Hayashi T."/>
        </authorList>
    </citation>
    <scope>NUCLEOTIDE SEQUENCE [LARGE SCALE GENOMIC DNA]</scope>
    <source>
        <strain>Ikeda</strain>
    </source>
</reference>
<feature type="chain" id="PRO_1000184974" description="tRNA N6-adenosine threonylcarbamoyltransferase">
    <location>
        <begin position="1"/>
        <end position="344"/>
    </location>
</feature>
<feature type="binding site" evidence="1">
    <location>
        <position position="111"/>
    </location>
    <ligand>
        <name>Fe cation</name>
        <dbReference type="ChEBI" id="CHEBI:24875"/>
    </ligand>
</feature>
<feature type="binding site" evidence="1">
    <location>
        <position position="115"/>
    </location>
    <ligand>
        <name>Fe cation</name>
        <dbReference type="ChEBI" id="CHEBI:24875"/>
    </ligand>
</feature>
<feature type="binding site" evidence="1">
    <location>
        <begin position="133"/>
        <end position="137"/>
    </location>
    <ligand>
        <name>substrate</name>
    </ligand>
</feature>
<feature type="binding site" evidence="1">
    <location>
        <position position="166"/>
    </location>
    <ligand>
        <name>substrate</name>
    </ligand>
</feature>
<feature type="binding site" evidence="1">
    <location>
        <position position="179"/>
    </location>
    <ligand>
        <name>substrate</name>
    </ligand>
</feature>
<feature type="binding site" evidence="1">
    <location>
        <position position="283"/>
    </location>
    <ligand>
        <name>substrate</name>
    </ligand>
</feature>
<feature type="binding site" evidence="1">
    <location>
        <position position="311"/>
    </location>
    <ligand>
        <name>Fe cation</name>
        <dbReference type="ChEBI" id="CHEBI:24875"/>
    </ligand>
</feature>
<name>TSAD_ORITI</name>